<feature type="chain" id="PRO_0000391596" description="CASP-like protein 2C1">
    <location>
        <begin position="1"/>
        <end position="185"/>
    </location>
</feature>
<feature type="topological domain" description="Cytoplasmic" evidence="2">
    <location>
        <begin position="1"/>
        <end position="12"/>
    </location>
</feature>
<feature type="transmembrane region" description="Helical" evidence="2">
    <location>
        <begin position="13"/>
        <end position="33"/>
    </location>
</feature>
<feature type="topological domain" description="Extracellular" evidence="2">
    <location>
        <begin position="34"/>
        <end position="52"/>
    </location>
</feature>
<feature type="transmembrane region" description="Helical" evidence="2">
    <location>
        <begin position="53"/>
        <end position="73"/>
    </location>
</feature>
<feature type="topological domain" description="Cytoplasmic" evidence="2">
    <location>
        <begin position="74"/>
        <end position="105"/>
    </location>
</feature>
<feature type="transmembrane region" description="Helical" evidence="2">
    <location>
        <begin position="106"/>
        <end position="126"/>
    </location>
</feature>
<feature type="topological domain" description="Extracellular" evidence="2">
    <location>
        <begin position="127"/>
        <end position="147"/>
    </location>
</feature>
<feature type="transmembrane region" description="Helical" evidence="2">
    <location>
        <begin position="148"/>
        <end position="168"/>
    </location>
</feature>
<feature type="topological domain" description="Cytoplasmic" evidence="2">
    <location>
        <begin position="169"/>
        <end position="185"/>
    </location>
</feature>
<comment type="subunit">
    <text evidence="1">Homodimer and heterodimers.</text>
</comment>
<comment type="subcellular location">
    <subcellularLocation>
        <location evidence="1">Cell membrane</location>
        <topology evidence="1">Multi-pass membrane protein</topology>
    </subcellularLocation>
</comment>
<comment type="similarity">
    <text evidence="3">Belongs to the Casparian strip membrane proteins (CASP) family.</text>
</comment>
<accession>C5Z782</accession>
<keyword id="KW-1003">Cell membrane</keyword>
<keyword id="KW-0472">Membrane</keyword>
<keyword id="KW-1185">Reference proteome</keyword>
<keyword id="KW-0812">Transmembrane</keyword>
<keyword id="KW-1133">Transmembrane helix</keyword>
<name>CSPLM_SORBI</name>
<proteinExistence type="evidence at transcript level"/>
<organism>
    <name type="scientific">Sorghum bicolor</name>
    <name type="common">Sorghum</name>
    <name type="synonym">Sorghum vulgare</name>
    <dbReference type="NCBI Taxonomy" id="4558"/>
    <lineage>
        <taxon>Eukaryota</taxon>
        <taxon>Viridiplantae</taxon>
        <taxon>Streptophyta</taxon>
        <taxon>Embryophyta</taxon>
        <taxon>Tracheophyta</taxon>
        <taxon>Spermatophyta</taxon>
        <taxon>Magnoliopsida</taxon>
        <taxon>Liliopsida</taxon>
        <taxon>Poales</taxon>
        <taxon>Poaceae</taxon>
        <taxon>PACMAD clade</taxon>
        <taxon>Panicoideae</taxon>
        <taxon>Andropogonodae</taxon>
        <taxon>Andropogoneae</taxon>
        <taxon>Sorghinae</taxon>
        <taxon>Sorghum</taxon>
    </lineage>
</organism>
<reference key="1">
    <citation type="journal article" date="2009" name="Nature">
        <title>The Sorghum bicolor genome and the diversification of grasses.</title>
        <authorList>
            <person name="Paterson A.H."/>
            <person name="Bowers J.E."/>
            <person name="Bruggmann R."/>
            <person name="Dubchak I."/>
            <person name="Grimwood J."/>
            <person name="Gundlach H."/>
            <person name="Haberer G."/>
            <person name="Hellsten U."/>
            <person name="Mitros T."/>
            <person name="Poliakov A."/>
            <person name="Schmutz J."/>
            <person name="Spannagl M."/>
            <person name="Tang H."/>
            <person name="Wang X."/>
            <person name="Wicker T."/>
            <person name="Bharti A.K."/>
            <person name="Chapman J."/>
            <person name="Feltus F.A."/>
            <person name="Gowik U."/>
            <person name="Grigoriev I.V."/>
            <person name="Lyons E."/>
            <person name="Maher C.A."/>
            <person name="Martis M."/>
            <person name="Narechania A."/>
            <person name="Otillar R.P."/>
            <person name="Penning B.W."/>
            <person name="Salamov A.A."/>
            <person name="Wang Y."/>
            <person name="Zhang L."/>
            <person name="Carpita N.C."/>
            <person name="Freeling M."/>
            <person name="Gingle A.R."/>
            <person name="Hash C.T."/>
            <person name="Keller B."/>
            <person name="Klein P."/>
            <person name="Kresovich S."/>
            <person name="McCann M.C."/>
            <person name="Ming R."/>
            <person name="Peterson D.G."/>
            <person name="Mehboob-ur-Rahman M."/>
            <person name="Ware D."/>
            <person name="Westhoff P."/>
            <person name="Mayer K.F.X."/>
            <person name="Messing J."/>
            <person name="Rokhsar D.S."/>
        </authorList>
    </citation>
    <scope>NUCLEOTIDE SEQUENCE [LARGE SCALE GENOMIC DNA]</scope>
    <source>
        <strain>cv. BTx623</strain>
    </source>
</reference>
<reference key="2">
    <citation type="journal article" date="2018" name="Plant J.">
        <title>The Sorghum bicolor reference genome: improved assembly, gene annotations, a transcriptome atlas, and signatures of genome organization.</title>
        <authorList>
            <person name="McCormick R.F."/>
            <person name="Truong S.K."/>
            <person name="Sreedasyam A."/>
            <person name="Jenkins J."/>
            <person name="Shu S."/>
            <person name="Sims D."/>
            <person name="Kennedy M."/>
            <person name="Amirebrahimi M."/>
            <person name="Weers B.D."/>
            <person name="McKinley B."/>
            <person name="Mattison A."/>
            <person name="Morishige D.T."/>
            <person name="Grimwood J."/>
            <person name="Schmutz J."/>
            <person name="Mullet J.E."/>
        </authorList>
    </citation>
    <scope>GENOME REANNOTATION</scope>
    <source>
        <strain>cv. BTx623</strain>
    </source>
</reference>
<reference key="3">
    <citation type="journal article" date="2014" name="Plant Physiol.">
        <title>Functional and evolutionary analysis of the CASPARIAN STRIP MEMBRANE DOMAIN PROTEIN family.</title>
        <authorList>
            <person name="Roppolo D."/>
            <person name="Boeckmann B."/>
            <person name="Pfister A."/>
            <person name="Boutet E."/>
            <person name="Rubio M.C."/>
            <person name="Denervaud-Tendon V."/>
            <person name="Vermeer J.E."/>
            <person name="Gheyselinck J."/>
            <person name="Xenarios I."/>
            <person name="Geldner N."/>
        </authorList>
    </citation>
    <scope>GENE FAMILY</scope>
    <scope>NOMENCLATURE</scope>
</reference>
<evidence type="ECO:0000250" key="1"/>
<evidence type="ECO:0000255" key="2"/>
<evidence type="ECO:0000305" key="3"/>
<sequence length="185" mass="19259">MVAARVSEVKAEGVLRGACAALAAAAALLVGLSTQTETVLLVRKKATVKDVQALWVLAMAAAAAAGYHLLQLLKCFYLGRRVGGGASPCRRSSRALAWTCLLLDKACAYTTFATTVAAAQACVIALDGAHALQWTKLCNIYTRFCEQIAGSLVLGMLAAVGTAVLSAASARNVFRHYSPGTYAAH</sequence>
<dbReference type="EMBL" id="CM000769">
    <property type="protein sequence ID" value="EER88760.1"/>
    <property type="molecule type" value="Genomic_DNA"/>
</dbReference>
<dbReference type="RefSeq" id="XP_002437393.1">
    <property type="nucleotide sequence ID" value="XM_002437348.1"/>
</dbReference>
<dbReference type="SMR" id="C5Z782"/>
<dbReference type="FunCoup" id="C5Z782">
    <property type="interactions" value="49"/>
</dbReference>
<dbReference type="STRING" id="4558.C5Z782"/>
<dbReference type="EnsemblPlants" id="EER88760">
    <property type="protein sequence ID" value="EER88760"/>
    <property type="gene ID" value="SORBI_3010G214800"/>
</dbReference>
<dbReference type="Gramene" id="EER88760">
    <property type="protein sequence ID" value="EER88760"/>
    <property type="gene ID" value="SORBI_3010G214800"/>
</dbReference>
<dbReference type="KEGG" id="sbi:8058451"/>
<dbReference type="eggNOG" id="ENOG502S20T">
    <property type="taxonomic scope" value="Eukaryota"/>
</dbReference>
<dbReference type="HOGENOM" id="CLU_066104_0_0_1"/>
<dbReference type="InParanoid" id="C5Z782"/>
<dbReference type="OMA" id="KGCAYMT"/>
<dbReference type="OrthoDB" id="689315at2759"/>
<dbReference type="Proteomes" id="UP000000768">
    <property type="component" value="Chromosome 10"/>
</dbReference>
<dbReference type="GO" id="GO:0005886">
    <property type="term" value="C:plasma membrane"/>
    <property type="evidence" value="ECO:0007669"/>
    <property type="project" value="UniProtKB-SubCell"/>
</dbReference>
<dbReference type="InterPro" id="IPR006459">
    <property type="entry name" value="CASP/CASPL"/>
</dbReference>
<dbReference type="InterPro" id="IPR006702">
    <property type="entry name" value="CASP_dom"/>
</dbReference>
<dbReference type="NCBIfam" id="TIGR01569">
    <property type="entry name" value="A_tha_TIGR01569"/>
    <property type="match status" value="1"/>
</dbReference>
<dbReference type="PANTHER" id="PTHR33573:SF30">
    <property type="entry name" value="CASP-LIKE PROTEIN 2C1-RELATED"/>
    <property type="match status" value="1"/>
</dbReference>
<dbReference type="PANTHER" id="PTHR33573">
    <property type="entry name" value="CASP-LIKE PROTEIN 4A4"/>
    <property type="match status" value="1"/>
</dbReference>
<dbReference type="Pfam" id="PF04535">
    <property type="entry name" value="CASP_dom"/>
    <property type="match status" value="1"/>
</dbReference>
<protein>
    <recommendedName>
        <fullName>CASP-like protein 2C1</fullName>
        <shortName>SbCASPL2C1</shortName>
    </recommendedName>
</protein>
<gene>
    <name type="ordered locus">Sb10g026120</name>
</gene>